<proteinExistence type="inferred from homology"/>
<protein>
    <recommendedName>
        <fullName evidence="1">UPF0761 membrane protein NMC0462</fullName>
    </recommendedName>
</protein>
<keyword id="KW-0997">Cell inner membrane</keyword>
<keyword id="KW-1003">Cell membrane</keyword>
<keyword id="KW-0472">Membrane</keyword>
<keyword id="KW-0812">Transmembrane</keyword>
<keyword id="KW-1133">Transmembrane helix</keyword>
<accession>A1KSD3</accession>
<sequence>MTFLQRLQGLADNKICAFAWFVVRRFDEERVPQAAASMTFTTLLALVPVLTVMVAVASIFPVFDRWSDSFVSFVNQTIVPQGADMVFDYINAFREQANRLTAIGSVMLVVTSLMLIRTIDNTFNRIWRVNSQRPWMMQFLVYWALLTFGPLSLGVGISFMVGSVQDAALASGAPQWSGALRTAATLTFMTLLLWGLYRFVPNRFVPARQAFVGALATAFCLETARSLFTWYMGNFDGYRSIYGAFAAVPFFLLWLNLLWTLVLGGAVLTSSLSYWRGEAFRRGFDSRGRFDDVLKILLLLDAAQKEGKALPVQEFRRHINMGYDELGELLEKLARHGYIYSGRQGWVLKTGADSIELNELFKLFVYRPLPVERDHVNQAVDAVMTPCLQTLNMTLAEFDAQAKKQQQS</sequence>
<reference key="1">
    <citation type="journal article" date="2007" name="PLoS Genet.">
        <title>Meningococcal genetic variation mechanisms viewed through comparative analysis of serogroup C strain FAM18.</title>
        <authorList>
            <person name="Bentley S.D."/>
            <person name="Vernikos G.S."/>
            <person name="Snyder L.A.S."/>
            <person name="Churcher C."/>
            <person name="Arrowsmith C."/>
            <person name="Chillingworth T."/>
            <person name="Cronin A."/>
            <person name="Davis P.H."/>
            <person name="Holroyd N.E."/>
            <person name="Jagels K."/>
            <person name="Maddison M."/>
            <person name="Moule S."/>
            <person name="Rabbinowitsch E."/>
            <person name="Sharp S."/>
            <person name="Unwin L."/>
            <person name="Whitehead S."/>
            <person name="Quail M.A."/>
            <person name="Achtman M."/>
            <person name="Barrell B.G."/>
            <person name="Saunders N.J."/>
            <person name="Parkhill J."/>
        </authorList>
    </citation>
    <scope>NUCLEOTIDE SEQUENCE [LARGE SCALE GENOMIC DNA]</scope>
    <source>
        <strain>ATCC 700532 / DSM 15464 / FAM18</strain>
    </source>
</reference>
<feature type="chain" id="PRO_1000044721" description="UPF0761 membrane protein NMC0462">
    <location>
        <begin position="1"/>
        <end position="408"/>
    </location>
</feature>
<feature type="transmembrane region" description="Helical" evidence="1">
    <location>
        <begin position="43"/>
        <end position="63"/>
    </location>
</feature>
<feature type="transmembrane region" description="Helical" evidence="1">
    <location>
        <begin position="100"/>
        <end position="120"/>
    </location>
</feature>
<feature type="transmembrane region" description="Helical" evidence="1">
    <location>
        <begin position="139"/>
        <end position="159"/>
    </location>
</feature>
<feature type="transmembrane region" description="Helical" evidence="1">
    <location>
        <begin position="176"/>
        <end position="196"/>
    </location>
</feature>
<feature type="transmembrane region" description="Helical" evidence="1">
    <location>
        <begin position="210"/>
        <end position="230"/>
    </location>
</feature>
<feature type="transmembrane region" description="Helical" evidence="1">
    <location>
        <begin position="248"/>
        <end position="268"/>
    </location>
</feature>
<gene>
    <name type="ordered locus">NMC0462</name>
</gene>
<name>Y462_NEIMF</name>
<dbReference type="EMBL" id="AM421808">
    <property type="protein sequence ID" value="CAM09763.1"/>
    <property type="molecule type" value="Genomic_DNA"/>
</dbReference>
<dbReference type="RefSeq" id="WP_002234642.1">
    <property type="nucleotide sequence ID" value="NC_008767.1"/>
</dbReference>
<dbReference type="SMR" id="A1KSD3"/>
<dbReference type="KEGG" id="nmc:NMC0462"/>
<dbReference type="HOGENOM" id="CLU_032288_1_0_4"/>
<dbReference type="Proteomes" id="UP000002286">
    <property type="component" value="Chromosome"/>
</dbReference>
<dbReference type="GO" id="GO:0005886">
    <property type="term" value="C:plasma membrane"/>
    <property type="evidence" value="ECO:0007669"/>
    <property type="project" value="UniProtKB-SubCell"/>
</dbReference>
<dbReference type="HAMAP" id="MF_00672">
    <property type="entry name" value="UPF0761"/>
    <property type="match status" value="1"/>
</dbReference>
<dbReference type="InterPro" id="IPR023679">
    <property type="entry name" value="UPF0761_bac"/>
</dbReference>
<dbReference type="InterPro" id="IPR017039">
    <property type="entry name" value="Virul_fac_BrkB"/>
</dbReference>
<dbReference type="NCBIfam" id="NF003256">
    <property type="entry name" value="PRK04214.1"/>
    <property type="match status" value="1"/>
</dbReference>
<dbReference type="NCBIfam" id="TIGR00765">
    <property type="entry name" value="yihY_not_rbn"/>
    <property type="match status" value="1"/>
</dbReference>
<dbReference type="PANTHER" id="PTHR30213">
    <property type="entry name" value="INNER MEMBRANE PROTEIN YHJD"/>
    <property type="match status" value="1"/>
</dbReference>
<dbReference type="PANTHER" id="PTHR30213:SF0">
    <property type="entry name" value="UPF0761 MEMBRANE PROTEIN YIHY"/>
    <property type="match status" value="1"/>
</dbReference>
<dbReference type="Pfam" id="PF03631">
    <property type="entry name" value="Virul_fac_BrkB"/>
    <property type="match status" value="1"/>
</dbReference>
<organism>
    <name type="scientific">Neisseria meningitidis serogroup C / serotype 2a (strain ATCC 700532 / DSM 15464 / FAM18)</name>
    <dbReference type="NCBI Taxonomy" id="272831"/>
    <lineage>
        <taxon>Bacteria</taxon>
        <taxon>Pseudomonadati</taxon>
        <taxon>Pseudomonadota</taxon>
        <taxon>Betaproteobacteria</taxon>
        <taxon>Neisseriales</taxon>
        <taxon>Neisseriaceae</taxon>
        <taxon>Neisseria</taxon>
    </lineage>
</organism>
<evidence type="ECO:0000255" key="1">
    <source>
        <dbReference type="HAMAP-Rule" id="MF_00672"/>
    </source>
</evidence>
<comment type="subcellular location">
    <subcellularLocation>
        <location evidence="1">Cell inner membrane</location>
        <topology evidence="1">Multi-pass membrane protein</topology>
    </subcellularLocation>
</comment>
<comment type="similarity">
    <text evidence="1">Belongs to the UPF0761 family.</text>
</comment>